<keyword id="KW-0028">Amino-acid biosynthesis</keyword>
<keyword id="KW-0057">Aromatic amino acid biosynthesis</keyword>
<keyword id="KW-0456">Lyase</keyword>
<keyword id="KW-0663">Pyridoxal phosphate</keyword>
<keyword id="KW-0822">Tryptophan biosynthesis</keyword>
<sequence length="225" mass="24635">VAAAIACALFNLKCKIYMGYKDIKRQSPNVFRMKLMGAEVISVENGSGTLKDACNEALRDWSRNYQKSHYMIGTAAGPHPYPTIVKEFQKMIGEEAKKQILEQENRLPDAIIACVGGGSNAIGIFSDFIDEKVNLIGVEPAGKGIETGKHGAPLTHGRTGIYFGMKSHLMQSQEGQIEKSWSVSAGLDFPSVGPEHSWLNSINRAKYVSVTDIEALEAFQILSKK</sequence>
<dbReference type="EC" id="4.2.1.20"/>
<dbReference type="EMBL" id="L46358">
    <property type="protein sequence ID" value="AAB05973.1"/>
    <property type="molecule type" value="Genomic_DNA"/>
</dbReference>
<dbReference type="SMR" id="Q44688"/>
<dbReference type="UniPathway" id="UPA00035">
    <property type="reaction ID" value="UER00044"/>
</dbReference>
<dbReference type="GO" id="GO:0005737">
    <property type="term" value="C:cytoplasm"/>
    <property type="evidence" value="ECO:0007669"/>
    <property type="project" value="TreeGrafter"/>
</dbReference>
<dbReference type="GO" id="GO:0004834">
    <property type="term" value="F:tryptophan synthase activity"/>
    <property type="evidence" value="ECO:0007669"/>
    <property type="project" value="UniProtKB-EC"/>
</dbReference>
<dbReference type="FunFam" id="3.40.50.1100:FF:000004">
    <property type="entry name" value="Tryptophan synthase beta chain"/>
    <property type="match status" value="1"/>
</dbReference>
<dbReference type="Gene3D" id="3.40.50.1100">
    <property type="match status" value="2"/>
</dbReference>
<dbReference type="InterPro" id="IPR023026">
    <property type="entry name" value="Trp_synth_beta/beta-like"/>
</dbReference>
<dbReference type="InterPro" id="IPR001926">
    <property type="entry name" value="TrpB-like_PALP"/>
</dbReference>
<dbReference type="InterPro" id="IPR036052">
    <property type="entry name" value="TrpB-like_PALP_sf"/>
</dbReference>
<dbReference type="PANTHER" id="PTHR48077:SF3">
    <property type="entry name" value="TRYPTOPHAN SYNTHASE"/>
    <property type="match status" value="1"/>
</dbReference>
<dbReference type="PANTHER" id="PTHR48077">
    <property type="entry name" value="TRYPTOPHAN SYNTHASE-RELATED"/>
    <property type="match status" value="1"/>
</dbReference>
<dbReference type="Pfam" id="PF00291">
    <property type="entry name" value="PALP"/>
    <property type="match status" value="1"/>
</dbReference>
<dbReference type="SUPFAM" id="SSF53686">
    <property type="entry name" value="Tryptophan synthase beta subunit-like PLP-dependent enzymes"/>
    <property type="match status" value="1"/>
</dbReference>
<evidence type="ECO:0000250" key="1"/>
<evidence type="ECO:0000305" key="2"/>
<feature type="chain" id="PRO_0000098932" description="Tryptophan synthase beta chain">
    <location>
        <begin position="1" status="less than"/>
        <end position="225" status="greater than"/>
    </location>
</feature>
<feature type="non-terminal residue">
    <location>
        <position position="1"/>
    </location>
</feature>
<feature type="non-terminal residue">
    <location>
        <position position="225"/>
    </location>
</feature>
<gene>
    <name type="primary">trpB</name>
</gene>
<organism>
    <name type="scientific">Buchnera aphidicola subsp. Rhopalosiphum padi</name>
    <dbReference type="NCBI Taxonomy" id="98793"/>
    <lineage>
        <taxon>Bacteria</taxon>
        <taxon>Pseudomonadati</taxon>
        <taxon>Pseudomonadota</taxon>
        <taxon>Gammaproteobacteria</taxon>
        <taxon>Enterobacterales</taxon>
        <taxon>Erwiniaceae</taxon>
        <taxon>Buchnera</taxon>
    </lineage>
</organism>
<name>TRPB_BUCRP</name>
<protein>
    <recommendedName>
        <fullName>Tryptophan synthase beta chain</fullName>
        <ecNumber>4.2.1.20</ecNumber>
    </recommendedName>
</protein>
<reference key="1">
    <citation type="journal article" date="1996" name="J. Mol. Evol.">
        <title>The tryptophan biosynthetic pathway of aphid endosymbionts (Buchnera): genetics and evolution of plasmid-associated anthranilate synthase (trpEG) within the aphididae.</title>
        <authorList>
            <person name="Rouhbakhsh D."/>
            <person name="Lai C.-Y."/>
            <person name="von Dohlen C.D."/>
            <person name="Clark M.A."/>
            <person name="Baumann L."/>
            <person name="Baumann P."/>
            <person name="Moran N.A."/>
            <person name="Voegtlin D.J."/>
        </authorList>
    </citation>
    <scope>NUCLEOTIDE SEQUENCE [GENOMIC DNA]</scope>
</reference>
<comment type="function">
    <text evidence="1">The beta subunit is responsible for the synthesis of L-tryptophan from indole and L-serine.</text>
</comment>
<comment type="catalytic activity">
    <reaction>
        <text>(1S,2R)-1-C-(indol-3-yl)glycerol 3-phosphate + L-serine = D-glyceraldehyde 3-phosphate + L-tryptophan + H2O</text>
        <dbReference type="Rhea" id="RHEA:10532"/>
        <dbReference type="ChEBI" id="CHEBI:15377"/>
        <dbReference type="ChEBI" id="CHEBI:33384"/>
        <dbReference type="ChEBI" id="CHEBI:57912"/>
        <dbReference type="ChEBI" id="CHEBI:58866"/>
        <dbReference type="ChEBI" id="CHEBI:59776"/>
        <dbReference type="EC" id="4.2.1.20"/>
    </reaction>
</comment>
<comment type="cofactor">
    <cofactor evidence="1">
        <name>pyridoxal 5'-phosphate</name>
        <dbReference type="ChEBI" id="CHEBI:597326"/>
    </cofactor>
</comment>
<comment type="pathway">
    <text>Amino-acid biosynthesis; L-tryptophan biosynthesis; L-tryptophan from chorismate: step 5/5.</text>
</comment>
<comment type="subunit">
    <text evidence="1">Tetramer of two alpha and two beta chains.</text>
</comment>
<comment type="similarity">
    <text evidence="2">Belongs to the TrpB family.</text>
</comment>
<proteinExistence type="inferred from homology"/>
<accession>Q44688</accession>